<organism>
    <name type="scientific">Xenopus laevis</name>
    <name type="common">African clawed frog</name>
    <dbReference type="NCBI Taxonomy" id="8355"/>
    <lineage>
        <taxon>Eukaryota</taxon>
        <taxon>Metazoa</taxon>
        <taxon>Chordata</taxon>
        <taxon>Craniata</taxon>
        <taxon>Vertebrata</taxon>
        <taxon>Euteleostomi</taxon>
        <taxon>Amphibia</taxon>
        <taxon>Batrachia</taxon>
        <taxon>Anura</taxon>
        <taxon>Pipoidea</taxon>
        <taxon>Pipidae</taxon>
        <taxon>Xenopodinae</taxon>
        <taxon>Xenopus</taxon>
        <taxon>Xenopus</taxon>
    </lineage>
</organism>
<keyword id="KW-0067">ATP-binding</keyword>
<keyword id="KW-0175">Coiled coil</keyword>
<keyword id="KW-0963">Cytoplasm</keyword>
<keyword id="KW-0418">Kinase</keyword>
<keyword id="KW-0472">Membrane</keyword>
<keyword id="KW-0547">Nucleotide-binding</keyword>
<keyword id="KW-1185">Reference proteome</keyword>
<keyword id="KW-0677">Repeat</keyword>
<keyword id="KW-0723">Serine/threonine-protein kinase</keyword>
<keyword id="KW-0808">Transferase</keyword>
<protein>
    <recommendedName>
        <fullName>Mitogen-activated protein kinase kinase kinase 13-A</fullName>
        <ecNumber>2.7.11.25</ecNumber>
    </recommendedName>
</protein>
<dbReference type="EC" id="2.7.11.25"/>
<dbReference type="EMBL" id="DQ862006">
    <property type="protein sequence ID" value="ABK15544.1"/>
    <property type="molecule type" value="mRNA"/>
</dbReference>
<dbReference type="RefSeq" id="NP_001165660.1">
    <property type="nucleotide sequence ID" value="NM_001172189.1"/>
</dbReference>
<dbReference type="SMR" id="A7J1T2"/>
<dbReference type="GeneID" id="100337578"/>
<dbReference type="KEGG" id="xla:100337578"/>
<dbReference type="AGR" id="Xenbase:XB-GENE-5753322"/>
<dbReference type="CTD" id="100337578"/>
<dbReference type="Xenbase" id="XB-GENE-5753322">
    <property type="gene designation" value="map3k13.L"/>
</dbReference>
<dbReference type="OrthoDB" id="339325at2759"/>
<dbReference type="Proteomes" id="UP000186698">
    <property type="component" value="Chromosome 9_10L"/>
</dbReference>
<dbReference type="Bgee" id="100337578">
    <property type="expression patterns" value="Expressed in testis and 9 other cell types or tissues"/>
</dbReference>
<dbReference type="GO" id="GO:0005737">
    <property type="term" value="C:cytoplasm"/>
    <property type="evidence" value="ECO:0000318"/>
    <property type="project" value="GO_Central"/>
</dbReference>
<dbReference type="GO" id="GO:0016020">
    <property type="term" value="C:membrane"/>
    <property type="evidence" value="ECO:0007669"/>
    <property type="project" value="UniProtKB-SubCell"/>
</dbReference>
<dbReference type="GO" id="GO:0005524">
    <property type="term" value="F:ATP binding"/>
    <property type="evidence" value="ECO:0007669"/>
    <property type="project" value="UniProtKB-KW"/>
</dbReference>
<dbReference type="GO" id="GO:0004709">
    <property type="term" value="F:MAP kinase kinase kinase activity"/>
    <property type="evidence" value="ECO:0007669"/>
    <property type="project" value="UniProtKB-EC"/>
</dbReference>
<dbReference type="GO" id="GO:0004672">
    <property type="term" value="F:protein kinase activity"/>
    <property type="evidence" value="ECO:0000318"/>
    <property type="project" value="GO_Central"/>
</dbReference>
<dbReference type="GO" id="GO:0106310">
    <property type="term" value="F:protein serine kinase activity"/>
    <property type="evidence" value="ECO:0007669"/>
    <property type="project" value="RHEA"/>
</dbReference>
<dbReference type="GO" id="GO:0007254">
    <property type="term" value="P:JNK cascade"/>
    <property type="evidence" value="ECO:0007669"/>
    <property type="project" value="TreeGrafter"/>
</dbReference>
<dbReference type="GO" id="GO:0060255">
    <property type="term" value="P:regulation of macromolecule metabolic process"/>
    <property type="evidence" value="ECO:0007669"/>
    <property type="project" value="UniProtKB-ARBA"/>
</dbReference>
<dbReference type="GO" id="GO:0080090">
    <property type="term" value="P:regulation of primary metabolic process"/>
    <property type="evidence" value="ECO:0007669"/>
    <property type="project" value="UniProtKB-ARBA"/>
</dbReference>
<dbReference type="GO" id="GO:0007165">
    <property type="term" value="P:signal transduction"/>
    <property type="evidence" value="ECO:0000318"/>
    <property type="project" value="GO_Central"/>
</dbReference>
<dbReference type="CDD" id="cd14059">
    <property type="entry name" value="STKc_MAP3K12_13"/>
    <property type="match status" value="1"/>
</dbReference>
<dbReference type="FunFam" id="1.10.510.10:FF:000087">
    <property type="entry name" value="Mitogen-activated protein kinase kinase kinase 12"/>
    <property type="match status" value="1"/>
</dbReference>
<dbReference type="FunFam" id="3.30.200.20:FF:000095">
    <property type="entry name" value="Mitogen-activated protein kinase kinase kinase 12"/>
    <property type="match status" value="1"/>
</dbReference>
<dbReference type="Gene3D" id="3.30.200.20">
    <property type="entry name" value="Phosphorylase Kinase, domain 1"/>
    <property type="match status" value="1"/>
</dbReference>
<dbReference type="Gene3D" id="1.10.510.10">
    <property type="entry name" value="Transferase(Phosphotransferase) domain 1"/>
    <property type="match status" value="1"/>
</dbReference>
<dbReference type="InterPro" id="IPR011009">
    <property type="entry name" value="Kinase-like_dom_sf"/>
</dbReference>
<dbReference type="InterPro" id="IPR017419">
    <property type="entry name" value="MAP3K12_MAP3K13"/>
</dbReference>
<dbReference type="InterPro" id="IPR000719">
    <property type="entry name" value="Prot_kinase_dom"/>
</dbReference>
<dbReference type="InterPro" id="IPR001245">
    <property type="entry name" value="Ser-Thr/Tyr_kinase_cat_dom"/>
</dbReference>
<dbReference type="InterPro" id="IPR008271">
    <property type="entry name" value="Ser/Thr_kinase_AS"/>
</dbReference>
<dbReference type="InterPro" id="IPR051681">
    <property type="entry name" value="Ser/Thr_Kinases-Pseudokinases"/>
</dbReference>
<dbReference type="PANTHER" id="PTHR44329:SF14">
    <property type="entry name" value="MITOGEN-ACTIVATED PROTEIN KINASE KINASE KINASE 13"/>
    <property type="match status" value="1"/>
</dbReference>
<dbReference type="PANTHER" id="PTHR44329">
    <property type="entry name" value="SERINE/THREONINE-PROTEIN KINASE TNNI3K-RELATED"/>
    <property type="match status" value="1"/>
</dbReference>
<dbReference type="Pfam" id="PF07714">
    <property type="entry name" value="PK_Tyr_Ser-Thr"/>
    <property type="match status" value="1"/>
</dbReference>
<dbReference type="PIRSF" id="PIRSF038165">
    <property type="entry name" value="MAPKKK12_MAPKKK13"/>
    <property type="match status" value="1"/>
</dbReference>
<dbReference type="PRINTS" id="PR00109">
    <property type="entry name" value="TYRKINASE"/>
</dbReference>
<dbReference type="SMART" id="SM00220">
    <property type="entry name" value="S_TKc"/>
    <property type="match status" value="1"/>
</dbReference>
<dbReference type="SUPFAM" id="SSF56112">
    <property type="entry name" value="Protein kinase-like (PK-like)"/>
    <property type="match status" value="1"/>
</dbReference>
<dbReference type="PROSITE" id="PS50011">
    <property type="entry name" value="PROTEIN_KINASE_DOM"/>
    <property type="match status" value="1"/>
</dbReference>
<dbReference type="PROSITE" id="PS00108">
    <property type="entry name" value="PROTEIN_KINASE_ST"/>
    <property type="match status" value="1"/>
</dbReference>
<proteinExistence type="evidence at transcript level"/>
<sequence length="961" mass="107185">MHLNDTMASPLEPLSWSSSPNLIVDTLREDKDYRVNYGDCTTIGHHEIKETPDKCDSLDNANSPVTATVLTSISEDSRDQFENSVLQLRDQDEPENTAPQGSSHSGDGGSYSGNEDIRIHFGHSGSGNSGFLEGLFGCLRPVWNIIGKAYSTDYKLQQQETWEVPFEEISELQWLGSGAQGAVFLGKFRGEEVAIKKVREQKETDIKHLRKLKHPNIIAFKGVCTQAPCYCLIMEYCAHGQLYEVLRAGRKVSPRLLVDWSNGIASGMNYLHLHKIIHRDLKSPNVLVTHTDTVKISDFGTSKELSDKSTKMSFAGTVAWMAPEVIRNEPVSEKVDIWSFGVLLWELLTGEIPYKDVDSSAIIWGVGSNSLHLPVPSTCPDGFKILMKQTWHSKPRNRPSFRQILMHLDIASADVLGTPQETYFKSQAEWREEVKKHFEKIKSEGTCIHRLDEELIRRRREELRHALDIREHYERKLERANNLYMELSAIMLQLEVREKELIRREQAVEKKYPGTYKRHPVRPIVHPNSVEKLIKKKGPPSRIPSQTKRPDLLKSDGIVSAEGSAASASPISGSPKTSSGGGKNRYRSKPRHRRVNSKGSHADFIGVLKHLESPALSQQSSQHQTLASPPVTSCSPYHETSQVMPTFHQTLNVHGQNIANCANNLRYFGPAAALRSPLSSHAQRRMSGSSPDLLSSTLEADSHIQPEREYEYCQQDPYNRCPGCTEAVQQDTDTGNWDSTNVVTAEYRTSGGDPPESPRHNLVQENNEKLESGGEQFSSFKAAIGVSALTVPTPPALPRRIRTLRKNGDESSEEEEGEVDSEVEFPRRHRPPRGMSKCQSYSTFSSENFSVSDGEEGNTSDHSNSPDDVAGGGKVWHGDKLDDLSQTPEIPIEISMQSDGLSDKECAVRRVKTQMSLGKLCTEEHNYENAGNFAESDCDSSEGECSDATVLTNNPVNSSTW</sequence>
<evidence type="ECO:0000250" key="1"/>
<evidence type="ECO:0000255" key="2"/>
<evidence type="ECO:0000255" key="3">
    <source>
        <dbReference type="PROSITE-ProRule" id="PRU00159"/>
    </source>
</evidence>
<evidence type="ECO:0000255" key="4">
    <source>
        <dbReference type="PROSITE-ProRule" id="PRU10027"/>
    </source>
</evidence>
<evidence type="ECO:0000256" key="5">
    <source>
        <dbReference type="SAM" id="MobiDB-lite"/>
    </source>
</evidence>
<gene>
    <name type="primary">map3k13-a</name>
</gene>
<name>M313A_XENLA</name>
<comment type="function">
    <text evidence="1">May have a role in the JNK signaling pathway.</text>
</comment>
<comment type="catalytic activity">
    <reaction>
        <text>L-seryl-[protein] + ATP = O-phospho-L-seryl-[protein] + ADP + H(+)</text>
        <dbReference type="Rhea" id="RHEA:17989"/>
        <dbReference type="Rhea" id="RHEA-COMP:9863"/>
        <dbReference type="Rhea" id="RHEA-COMP:11604"/>
        <dbReference type="ChEBI" id="CHEBI:15378"/>
        <dbReference type="ChEBI" id="CHEBI:29999"/>
        <dbReference type="ChEBI" id="CHEBI:30616"/>
        <dbReference type="ChEBI" id="CHEBI:83421"/>
        <dbReference type="ChEBI" id="CHEBI:456216"/>
        <dbReference type="EC" id="2.7.11.25"/>
    </reaction>
</comment>
<comment type="catalytic activity">
    <reaction>
        <text>L-threonyl-[protein] + ATP = O-phospho-L-threonyl-[protein] + ADP + H(+)</text>
        <dbReference type="Rhea" id="RHEA:46608"/>
        <dbReference type="Rhea" id="RHEA-COMP:11060"/>
        <dbReference type="Rhea" id="RHEA-COMP:11605"/>
        <dbReference type="ChEBI" id="CHEBI:15378"/>
        <dbReference type="ChEBI" id="CHEBI:30013"/>
        <dbReference type="ChEBI" id="CHEBI:30616"/>
        <dbReference type="ChEBI" id="CHEBI:61977"/>
        <dbReference type="ChEBI" id="CHEBI:456216"/>
        <dbReference type="EC" id="2.7.11.25"/>
    </reaction>
</comment>
<comment type="subcellular location">
    <subcellularLocation>
        <location>Cytoplasm</location>
    </subcellularLocation>
    <subcellularLocation>
        <location evidence="1">Membrane</location>
        <topology evidence="1">Peripheral membrane protein</topology>
    </subcellularLocation>
</comment>
<comment type="similarity">
    <text evidence="3">Belongs to the protein kinase superfamily. Ser/Thr protein kinase family.</text>
</comment>
<feature type="chain" id="PRO_0000366129" description="Mitogen-activated protein kinase kinase kinase 13-A">
    <location>
        <begin position="1"/>
        <end position="961"/>
    </location>
</feature>
<feature type="domain" description="Protein kinase" evidence="3">
    <location>
        <begin position="169"/>
        <end position="410"/>
    </location>
</feature>
<feature type="region of interest" description="Disordered" evidence="5">
    <location>
        <begin position="88"/>
        <end position="118"/>
    </location>
</feature>
<feature type="region of interest" description="Leucine-zipper 1">
    <location>
        <begin position="434"/>
        <end position="455"/>
    </location>
</feature>
<feature type="region of interest" description="Leucine-zipper 2">
    <location>
        <begin position="487"/>
        <end position="508"/>
    </location>
</feature>
<feature type="region of interest" description="Disordered" evidence="5">
    <location>
        <begin position="513"/>
        <end position="600"/>
    </location>
</feature>
<feature type="region of interest" description="Disordered" evidence="5">
    <location>
        <begin position="615"/>
        <end position="637"/>
    </location>
</feature>
<feature type="region of interest" description="Disordered" evidence="5">
    <location>
        <begin position="799"/>
        <end position="883"/>
    </location>
</feature>
<feature type="region of interest" description="Acidic" evidence="1">
    <location>
        <begin position="811"/>
        <end position="824"/>
    </location>
</feature>
<feature type="coiled-coil region" evidence="2">
    <location>
        <begin position="458"/>
        <end position="497"/>
    </location>
</feature>
<feature type="compositionally biased region" description="Low complexity" evidence="5">
    <location>
        <begin position="560"/>
        <end position="578"/>
    </location>
</feature>
<feature type="compositionally biased region" description="Basic residues" evidence="5">
    <location>
        <begin position="584"/>
        <end position="596"/>
    </location>
</feature>
<feature type="compositionally biased region" description="Acidic residues" evidence="5">
    <location>
        <begin position="810"/>
        <end position="823"/>
    </location>
</feature>
<feature type="compositionally biased region" description="Polar residues" evidence="5">
    <location>
        <begin position="837"/>
        <end position="851"/>
    </location>
</feature>
<feature type="active site" description="Proton acceptor" evidence="3 4">
    <location>
        <position position="280"/>
    </location>
</feature>
<feature type="binding site" evidence="3">
    <location>
        <begin position="175"/>
        <end position="183"/>
    </location>
    <ligand>
        <name>ATP</name>
        <dbReference type="ChEBI" id="CHEBI:30616"/>
    </ligand>
</feature>
<feature type="binding site" evidence="3">
    <location>
        <position position="196"/>
    </location>
    <ligand>
        <name>ATP</name>
        <dbReference type="ChEBI" id="CHEBI:30616"/>
    </ligand>
</feature>
<accession>A7J1T2</accession>
<reference key="1">
    <citation type="submission" date="2006-07" db="EMBL/GenBank/DDBJ databases">
        <authorList>
            <person name="Itoh A."/>
            <person name="Ryan K."/>
            <person name="Itoh T."/>
        </authorList>
    </citation>
    <scope>NUCLEOTIDE SEQUENCE [MRNA]</scope>
    <source>
        <strain>xLZK-A_20115</strain>
    </source>
</reference>